<proteinExistence type="evidence at protein level"/>
<organism>
    <name type="scientific">Xenopus laevis</name>
    <name type="common">African clawed frog</name>
    <dbReference type="NCBI Taxonomy" id="8355"/>
    <lineage>
        <taxon>Eukaryota</taxon>
        <taxon>Metazoa</taxon>
        <taxon>Chordata</taxon>
        <taxon>Craniata</taxon>
        <taxon>Vertebrata</taxon>
        <taxon>Euteleostomi</taxon>
        <taxon>Amphibia</taxon>
        <taxon>Batrachia</taxon>
        <taxon>Anura</taxon>
        <taxon>Pipoidea</taxon>
        <taxon>Pipidae</taxon>
        <taxon>Xenopodinae</taxon>
        <taxon>Xenopus</taxon>
        <taxon>Xenopus</taxon>
    </lineage>
</organism>
<keyword id="KW-0891">Chondrogenesis</keyword>
<keyword id="KW-0165">Cleavage on pair of basic residues</keyword>
<keyword id="KW-0202">Cytokine</keyword>
<keyword id="KW-0217">Developmental protein</keyword>
<keyword id="KW-0221">Differentiation</keyword>
<keyword id="KW-1015">Disulfide bond</keyword>
<keyword id="KW-0272">Extracellular matrix</keyword>
<keyword id="KW-0325">Glycoprotein</keyword>
<keyword id="KW-0339">Growth factor</keyword>
<keyword id="KW-0892">Osteogenesis</keyword>
<keyword id="KW-1185">Reference proteome</keyword>
<keyword id="KW-0964">Secreted</keyword>
<keyword id="KW-0732">Signal</keyword>
<evidence type="ECO:0000250" key="1"/>
<evidence type="ECO:0000255" key="2"/>
<evidence type="ECO:0000256" key="3">
    <source>
        <dbReference type="SAM" id="MobiDB-lite"/>
    </source>
</evidence>
<evidence type="ECO:0000269" key="4">
    <source>
    </source>
</evidence>
<evidence type="ECO:0000269" key="5">
    <source>
    </source>
</evidence>
<evidence type="ECO:0000269" key="6">
    <source>
    </source>
</evidence>
<evidence type="ECO:0000305" key="7"/>
<dbReference type="EMBL" id="X63426">
    <property type="protein sequence ID" value="CAA45020.1"/>
    <property type="molecule type" value="mRNA"/>
</dbReference>
<dbReference type="PIR" id="JH0689">
    <property type="entry name" value="JH0689"/>
</dbReference>
<dbReference type="RefSeq" id="NP_001095263.1">
    <property type="nucleotide sequence ID" value="NM_001101793.1"/>
</dbReference>
<dbReference type="SMR" id="P30885"/>
<dbReference type="GlyCosmos" id="P30885">
    <property type="glycosylation" value="5 sites, No reported glycans"/>
</dbReference>
<dbReference type="GeneID" id="399322"/>
<dbReference type="KEGG" id="xla:399322"/>
<dbReference type="AGR" id="Xenbase:XB-GENE-6254046"/>
<dbReference type="CTD" id="399322"/>
<dbReference type="Xenbase" id="XB-GENE-6254046">
    <property type="gene designation" value="bmp4.S"/>
</dbReference>
<dbReference type="OMA" id="PQNHELL"/>
<dbReference type="OrthoDB" id="5987191at2759"/>
<dbReference type="Proteomes" id="UP000186698">
    <property type="component" value="Chromosome 8S"/>
</dbReference>
<dbReference type="Bgee" id="399322">
    <property type="expression patterns" value="Expressed in gastrula and 19 other cell types or tissues"/>
</dbReference>
<dbReference type="GO" id="GO:0005615">
    <property type="term" value="C:extracellular space"/>
    <property type="evidence" value="ECO:0000318"/>
    <property type="project" value="GO_Central"/>
</dbReference>
<dbReference type="GO" id="GO:0005125">
    <property type="term" value="F:cytokine activity"/>
    <property type="evidence" value="ECO:0000318"/>
    <property type="project" value="GO_Central"/>
</dbReference>
<dbReference type="GO" id="GO:0008083">
    <property type="term" value="F:growth factor activity"/>
    <property type="evidence" value="ECO:0007669"/>
    <property type="project" value="UniProtKB-KW"/>
</dbReference>
<dbReference type="GO" id="GO:0051216">
    <property type="term" value="P:cartilage development"/>
    <property type="evidence" value="ECO:0007669"/>
    <property type="project" value="UniProtKB-KW"/>
</dbReference>
<dbReference type="GO" id="GO:0030154">
    <property type="term" value="P:cell differentiation"/>
    <property type="evidence" value="ECO:0007669"/>
    <property type="project" value="UniProtKB-KW"/>
</dbReference>
<dbReference type="GO" id="GO:0001503">
    <property type="term" value="P:ossification"/>
    <property type="evidence" value="ECO:0007669"/>
    <property type="project" value="UniProtKB-KW"/>
</dbReference>
<dbReference type="CDD" id="cd19391">
    <property type="entry name" value="TGF_beta_BMP4_BMP2B"/>
    <property type="match status" value="1"/>
</dbReference>
<dbReference type="FunFam" id="2.10.90.10:FF:000103">
    <property type="entry name" value="Bone morphogenetic protein 16"/>
    <property type="match status" value="1"/>
</dbReference>
<dbReference type="FunFam" id="2.60.120.970:FF:000005">
    <property type="entry name" value="Bone morphogenetic protein 4"/>
    <property type="match status" value="1"/>
</dbReference>
<dbReference type="Gene3D" id="2.60.120.970">
    <property type="match status" value="1"/>
</dbReference>
<dbReference type="Gene3D" id="2.10.90.10">
    <property type="entry name" value="Cystine-knot cytokines"/>
    <property type="match status" value="1"/>
</dbReference>
<dbReference type="InterPro" id="IPR047833">
    <property type="entry name" value="BMP4_TGF_beta-like"/>
</dbReference>
<dbReference type="InterPro" id="IPR029034">
    <property type="entry name" value="Cystine-knot_cytokine"/>
</dbReference>
<dbReference type="InterPro" id="IPR001839">
    <property type="entry name" value="TGF-b_C"/>
</dbReference>
<dbReference type="InterPro" id="IPR001111">
    <property type="entry name" value="TGF-b_propeptide"/>
</dbReference>
<dbReference type="InterPro" id="IPR015615">
    <property type="entry name" value="TGF-beta-rel"/>
</dbReference>
<dbReference type="InterPro" id="IPR017948">
    <property type="entry name" value="TGFb_CS"/>
</dbReference>
<dbReference type="PANTHER" id="PTHR11848:SF165">
    <property type="entry name" value="BONE MORPHOGENETIC PROTEIN 4"/>
    <property type="match status" value="1"/>
</dbReference>
<dbReference type="PANTHER" id="PTHR11848">
    <property type="entry name" value="TGF-BETA FAMILY"/>
    <property type="match status" value="1"/>
</dbReference>
<dbReference type="Pfam" id="PF00019">
    <property type="entry name" value="TGF_beta"/>
    <property type="match status" value="1"/>
</dbReference>
<dbReference type="Pfam" id="PF00688">
    <property type="entry name" value="TGFb_propeptide"/>
    <property type="match status" value="1"/>
</dbReference>
<dbReference type="SMART" id="SM00204">
    <property type="entry name" value="TGFB"/>
    <property type="match status" value="1"/>
</dbReference>
<dbReference type="SUPFAM" id="SSF57501">
    <property type="entry name" value="Cystine-knot cytokines"/>
    <property type="match status" value="1"/>
</dbReference>
<dbReference type="PROSITE" id="PS00250">
    <property type="entry name" value="TGF_BETA_1"/>
    <property type="match status" value="1"/>
</dbReference>
<dbReference type="PROSITE" id="PS51362">
    <property type="entry name" value="TGF_BETA_2"/>
    <property type="match status" value="1"/>
</dbReference>
<name>BMP4_XENLA</name>
<protein>
    <recommendedName>
        <fullName>Bone morphogenetic protein 4</fullName>
        <shortName>BMP-4</shortName>
    </recommendedName>
</protein>
<comment type="function">
    <text evidence="4 5">Posterior-ventralizing factor in Xenopus mesoderm induction. Induces posteroventral mesoderm and counteracts dorsalizing signals such as activin.</text>
</comment>
<comment type="subunit">
    <text evidence="1 6">Homodimer; disulfide-linked (By similarity). Forms heterodimers with the TGF-beta family member derriere. Part of a complex consisting of twsg1 and chrd. Interacts with tsku (PubMed:16319115).</text>
</comment>
<comment type="subcellular location">
    <subcellularLocation>
        <location>Secreted</location>
        <location>Extracellular space</location>
        <location>Extracellular matrix</location>
    </subcellularLocation>
</comment>
<comment type="developmental stage">
    <text evidence="5">Expressed both maternally and zygotically. Expressed at a low level maternally with expression levels increasing rapidly after stage 9. Expression is maintained throughout development and in a range of adult tissues including the ovary and testis.</text>
</comment>
<comment type="similarity">
    <text evidence="7">Belongs to the TGF-beta family.</text>
</comment>
<gene>
    <name type="primary">bmp4</name>
    <name type="synonym">dvr-4</name>
</gene>
<feature type="signal peptide" evidence="2">
    <location>
        <begin position="1"/>
        <end position="19"/>
    </location>
</feature>
<feature type="propeptide" id="PRO_0000033864" evidence="1">
    <location>
        <begin position="20"/>
        <end position="287"/>
    </location>
</feature>
<feature type="chain" id="PRO_0000033865" description="Bone morphogenetic protein 4">
    <location>
        <begin position="288"/>
        <end position="401"/>
    </location>
</feature>
<feature type="region of interest" description="Disordered" evidence="3">
    <location>
        <begin position="279"/>
        <end position="299"/>
    </location>
</feature>
<feature type="compositionally biased region" description="Basic residues" evidence="3">
    <location>
        <begin position="280"/>
        <end position="299"/>
    </location>
</feature>
<feature type="glycosylation site" description="N-linked (GlcNAc...) asparagine" evidence="2">
    <location>
        <position position="141"/>
    </location>
</feature>
<feature type="glycosylation site" description="N-linked (GlcNAc...) asparagine" evidence="2">
    <location>
        <position position="204"/>
    </location>
</feature>
<feature type="glycosylation site" description="N-linked (GlcNAc...) asparagine" evidence="2">
    <location>
        <position position="238"/>
    </location>
</feature>
<feature type="glycosylation site" description="N-linked (GlcNAc...) asparagine" evidence="2">
    <location>
        <position position="343"/>
    </location>
</feature>
<feature type="glycosylation site" description="N-linked (GlcNAc...) asparagine" evidence="2">
    <location>
        <position position="358"/>
    </location>
</feature>
<feature type="disulfide bond" evidence="1">
    <location>
        <begin position="301"/>
        <end position="366"/>
    </location>
</feature>
<feature type="disulfide bond" evidence="1">
    <location>
        <begin position="330"/>
        <end position="398"/>
    </location>
</feature>
<feature type="disulfide bond" evidence="1">
    <location>
        <begin position="334"/>
        <end position="400"/>
    </location>
</feature>
<feature type="disulfide bond" description="Interchain" evidence="1">
    <location>
        <position position="365"/>
    </location>
</feature>
<sequence length="401" mass="45988">MIPGNRMLMVILLSQVLLGGTNYASLIPDTGKKKVAADIQGGGRRSPQSNELLRDFEVTLLQMFGLRKRPQPSKDVVVPAYMRDLYRLQSAEEEDELHDISMEYPETPTSRANTVRSFHHEEHLENLPGTEENGNFRFVFNLSSIPENEVISSAELRLYREQIDHGPAWDEGFHRINIYEVMKPITANGHMINRLLDTRVIHHNVTQWESFDVSPAIMRWTLDKQINHGLAIEVIHLNQTKTYQGKHVRISRSLLPQKDADWSQMRPLLITFSHDGRGHALTRRSKRSPKQQRPRKKNKHCRRHSLYVDFSDVGWNDWIVAPPGYQAFYCHGDCPFPLADHLNSTNHAIVQTLVNSVNSSIPKACCVPTELSAISMLYLDEYDKVVLKNYQEMVVEGCGCR</sequence>
<accession>P30885</accession>
<reference key="1">
    <citation type="journal article" date="1992" name="Biochem. Biophys. Res. Commun.">
        <title>Genes for bone morphogenetic proteins are differentially transcribed in early amphibian embryos.</title>
        <authorList>
            <person name="Nishimatsu S."/>
            <person name="Suzuki A."/>
            <person name="Shoda A."/>
            <person name="Murakami K."/>
            <person name="Ueno N."/>
        </authorList>
    </citation>
    <scope>NUCLEOTIDE SEQUENCE [MRNA]</scope>
    <scope>FUNCTION</scope>
    <scope>DEVELOPMENTAL STAGE</scope>
</reference>
<reference key="2">
    <citation type="journal article" date="1992" name="Development">
        <title>DVR-4 (bone morphogenetic protein-4) as a posterior-ventralizing factor in Xenopus mesoderm induction.</title>
        <authorList>
            <person name="Jones C.M."/>
            <person name="Lyons K.M."/>
            <person name="Lapan P.M."/>
            <person name="Wright C.V."/>
            <person name="Hogan B.L."/>
        </authorList>
    </citation>
    <scope>FUNCTION</scope>
</reference>
<reference key="3">
    <citation type="journal article" date="2000" name="Nature">
        <title>The evolutionarily conserved BMP-binding protein Twisted gastrulation promotes BMP signalling.</title>
        <authorList>
            <person name="Oelgeschlager M."/>
            <person name="Larrain J."/>
            <person name="Geissert D."/>
            <person name="De Robertis E.M."/>
        </authorList>
    </citation>
    <scope>INTERACTION WITH TWSG1 AND CHRD</scope>
</reference>
<reference key="4">
    <citation type="journal article" date="2002" name="Development">
        <title>Effects of heterodimerization and proteolytic processing on Derriere and Nodal activity: implications for mesoderm induction in Xenopus.</title>
        <authorList>
            <person name="Eimon P.M."/>
            <person name="Harland R.M."/>
        </authorList>
    </citation>
    <scope>INTERACTION WITH DERRIERE</scope>
</reference>
<reference key="5">
    <citation type="journal article" date="2006" name="Development">
        <title>Tsukushi controls ectodermal patterning and neural crest specification in Xenopus by direct regulation of BMP4 and X-delta-1 activity.</title>
        <authorList>
            <person name="Kuriyama S."/>
            <person name="Lupo G."/>
            <person name="Ohta K."/>
            <person name="Ohnuma S."/>
            <person name="Harris W.A."/>
            <person name="Tanaka H."/>
        </authorList>
    </citation>
    <scope>INTERACTION WITH TSKU</scope>
</reference>